<proteinExistence type="evidence at protein level"/>
<feature type="signal peptide" evidence="1">
    <location>
        <begin position="1"/>
        <end position="34"/>
    </location>
</feature>
<feature type="chain" id="PRO_0000021385" description="Glucosyltransferase-I">
    <location>
        <begin position="35"/>
        <end position="1476"/>
    </location>
</feature>
<feature type="repeat" description="Cell wall-binding 1">
    <location>
        <begin position="159"/>
        <end position="178"/>
    </location>
</feature>
<feature type="repeat" description="Cell wall-binding 2">
    <location>
        <begin position="179"/>
        <end position="199"/>
    </location>
</feature>
<feature type="repeat" description="Cell wall-binding 3">
    <location>
        <begin position="1087"/>
        <end position="1106"/>
    </location>
</feature>
<feature type="repeat" description="Cell wall-binding 4">
    <location>
        <begin position="1107"/>
        <end position="1126"/>
    </location>
</feature>
<feature type="repeat" description="Cell wall-binding 5">
    <location>
        <begin position="1170"/>
        <end position="1189"/>
    </location>
</feature>
<feature type="repeat" description="Cell wall-binding 6">
    <location>
        <begin position="1214"/>
        <end position="1234"/>
    </location>
</feature>
<feature type="repeat" description="Cell wall-binding 7">
    <location>
        <begin position="1235"/>
        <end position="1254"/>
    </location>
</feature>
<feature type="repeat" description="Cell wall-binding 8">
    <location>
        <begin position="1279"/>
        <end position="1299"/>
    </location>
</feature>
<feature type="repeat" description="Cell wall-binding 9">
    <location>
        <begin position="1300"/>
        <end position="1319"/>
    </location>
</feature>
<feature type="repeat" description="Cell wall-binding 10">
    <location>
        <begin position="1344"/>
        <end position="1364"/>
    </location>
</feature>
<feature type="repeat" description="Cell wall-binding 11">
    <location>
        <begin position="1365"/>
        <end position="1384"/>
    </location>
</feature>
<feature type="repeat" description="Cell wall-binding 12">
    <location>
        <begin position="1409"/>
        <end position="1429"/>
    </location>
</feature>
<feature type="repeat" description="Cell wall-binding 13">
    <location>
        <begin position="1430"/>
        <end position="1449"/>
    </location>
</feature>
<feature type="region of interest" description="Disordered" evidence="2">
    <location>
        <begin position="42"/>
        <end position="89"/>
    </location>
</feature>
<feature type="region of interest" description="Disordered" evidence="2">
    <location>
        <begin position="102"/>
        <end position="141"/>
    </location>
</feature>
<feature type="region of interest" description="Catalytic; approximate">
    <location>
        <begin position="200"/>
        <end position="1051"/>
    </location>
</feature>
<feature type="compositionally biased region" description="Polar residues" evidence="2">
    <location>
        <begin position="43"/>
        <end position="81"/>
    </location>
</feature>
<feature type="compositionally biased region" description="Polar residues" evidence="2">
    <location>
        <begin position="102"/>
        <end position="139"/>
    </location>
</feature>
<feature type="sequence variant" description="In strain: MT4239.">
    <original>S</original>
    <variation>T</variation>
    <location>
        <position position="62"/>
    </location>
</feature>
<feature type="sequence variant" description="In strain: GS-5.">
    <original>T</original>
    <variation>I</variation>
    <location>
        <position position="65"/>
    </location>
</feature>
<feature type="sequence variant" description="In strain: GS-5, MT4245, MT4251, MT4467 and MT8148.">
    <original>V</original>
    <variation>A</variation>
    <location>
        <position position="68"/>
    </location>
</feature>
<feature type="sequence variant" description="In strain: MT4251.">
    <original>Q</original>
    <variation>P</variation>
    <location>
        <position position="78"/>
    </location>
</feature>
<feature type="sequence variant" description="In strain: GS-5, MT4245, MT4251, MT4467 and MT8148.">
    <original>I</original>
    <variation>S</variation>
    <location>
        <position position="86"/>
    </location>
</feature>
<feature type="sequence variant" description="In strain: MT4251.">
    <original>S</original>
    <variation>F</variation>
    <location>
        <position position="89"/>
    </location>
</feature>
<feature type="sequence variant" description="In strain: MT4251.">
    <original>K</original>
    <variation>N</variation>
    <location>
        <position position="168"/>
    </location>
</feature>
<feature type="sequence variant" description="In strain: GS-5, MT4467 and MT8148.">
    <original>S</original>
    <variation>D</variation>
    <location>
        <position position="276"/>
    </location>
</feature>
<feature type="sequence variant" description="In strain: MT4239.">
    <original>N</original>
    <variation>R</variation>
    <location>
        <position position="399"/>
    </location>
</feature>
<feature type="sequence variant" description="In strain: MT4239.">
    <original>I</original>
    <variation>T</variation>
    <location>
        <position position="474"/>
    </location>
</feature>
<feature type="sequence variant" description="In strain: MT8148.">
    <original>K</original>
    <variation>R</variation>
    <location>
        <position position="512"/>
    </location>
</feature>
<feature type="sequence variant" description="In strain: MT8148.">
    <original>F</original>
    <variation>Y</variation>
    <location>
        <position position="519"/>
    </location>
</feature>
<feature type="sequence variant" description="In strain: MT8148.">
    <original>T</original>
    <variation>I</variation>
    <location>
        <position position="701"/>
    </location>
</feature>
<feature type="sequence variant" description="In strain: MT8148.">
    <original>A</original>
    <variation>V</variation>
    <location>
        <position position="708"/>
    </location>
</feature>
<feature type="sequence variant" description="In strain: MT8148.">
    <original>F</original>
    <variation>L</variation>
    <location>
        <position position="938"/>
    </location>
</feature>
<feature type="sequence variant" description="In strain: GS-5, MT4239 and MT4467.">
    <original>FGKPVE</original>
    <variation>YGTPVA</variation>
    <location>
        <begin position="952"/>
        <end position="957"/>
    </location>
</feature>
<feature type="sequence variant" description="In strain: GS-5, MT4239 and MT4467.">
    <original>SV</original>
    <variation>NT</variation>
    <location>
        <begin position="963"/>
        <end position="964"/>
    </location>
</feature>
<feature type="sequence variant" description="In strain: GS-5, MT4239 and MT4467.">
    <original>ADS</original>
    <variation>VDG</variation>
    <location>
        <begin position="968"/>
        <end position="970"/>
    </location>
</feature>
<feature type="sequence variant" description="In strain: MT4239.">
    <original>A</original>
    <variation>T</variation>
    <location>
        <position position="1086"/>
    </location>
</feature>
<feature type="sequence variant" description="In strain: MT4239.">
    <original>S</original>
    <variation>N</variation>
    <location>
        <position position="1158"/>
    </location>
</feature>
<feature type="sequence variant" description="In strain: MT4251.">
    <original>H</original>
    <variation>Y</variation>
    <location>
        <position position="1163"/>
    </location>
</feature>
<feature type="sequence variant" description="In strain: MT8148.">
    <original>E</original>
    <variation>K</variation>
    <location>
        <position position="1168"/>
    </location>
</feature>
<feature type="sequence variant" description="In strain: MT8148.">
    <original>Y</original>
    <variation>C</variation>
    <location>
        <position position="1182"/>
    </location>
</feature>
<feature type="sequence variant" description="In strain: MT4239.">
    <original>A</original>
    <variation>P</variation>
    <location>
        <position position="1234"/>
    </location>
</feature>
<feature type="sequence variant" description="In strain: GS-5 and MT4467.">
    <original>R</original>
    <variation>H</variation>
    <location>
        <position position="1263"/>
    </location>
</feature>
<feature type="sequence variant" description="In strain: MT8148.">
    <original>R</original>
    <variation>P</variation>
    <location>
        <position position="1263"/>
    </location>
</feature>
<feature type="sequence variant" description="In strain: GS-5, MT4239, MT4467 and MT8148.">
    <original>Y</original>
    <variation>H</variation>
    <location>
        <position position="1264"/>
    </location>
</feature>
<feature type="sequence variant" description="In strain: GS-5, MT4239, MT4467 and MT8148.">
    <original>S</original>
    <variation>G</variation>
    <location>
        <position position="1272"/>
    </location>
</feature>
<feature type="sequence variant" description="In strain: GS-5 and MT4467.">
    <original>H</original>
    <variation>Y</variation>
    <location>
        <position position="1329"/>
    </location>
</feature>
<feature type="sequence variant" description="In strain: GS-5, MT4239, MT4467 and MT8148.">
    <original>Y</original>
    <variation>H</variation>
    <location>
        <position position="1394"/>
    </location>
</feature>
<feature type="sequence variant" description="In strain: GS-5, MT4239, MT4467 and MT8148.">
    <original>S</original>
    <variation>G</variation>
    <location>
        <position position="1402"/>
    </location>
</feature>
<feature type="sequence variant" description="In strain: MT4467.">
    <original>Y</original>
    <variation>H</variation>
    <location>
        <position position="1459"/>
    </location>
</feature>
<feature type="sequence conflict" description="In Ref. 1; AAA88588." evidence="3" ref="1">
    <original>R</original>
    <variation>A</variation>
    <location>
        <position position="570"/>
    </location>
</feature>
<feature type="sequence conflict" description="In Ref. 1; AAA88588." evidence="3" ref="1">
    <original>ADQDVRVAASTAPSTDGK</original>
    <variation>LIKMFALRLARPHQQMA</variation>
    <location>
        <begin position="800"/>
        <end position="817"/>
    </location>
</feature>
<feature type="sequence conflict" description="In Ref. 1; AAA88588." evidence="3" ref="1">
    <original>H</original>
    <variation>L</variation>
    <location>
        <position position="1310"/>
    </location>
</feature>
<feature type="strand" evidence="4">
    <location>
        <begin position="216"/>
        <end position="219"/>
    </location>
</feature>
<feature type="turn" evidence="4">
    <location>
        <begin position="220"/>
        <end position="222"/>
    </location>
</feature>
<feature type="strand" evidence="4">
    <location>
        <begin position="223"/>
        <end position="226"/>
    </location>
</feature>
<feature type="strand" evidence="4">
    <location>
        <begin position="228"/>
        <end position="230"/>
    </location>
</feature>
<feature type="strand" evidence="4">
    <location>
        <begin position="248"/>
        <end position="253"/>
    </location>
</feature>
<feature type="turn" evidence="4">
    <location>
        <begin position="254"/>
        <end position="256"/>
    </location>
</feature>
<feature type="strand" evidence="4">
    <location>
        <begin position="257"/>
        <end position="260"/>
    </location>
</feature>
<feature type="helix" evidence="4">
    <location>
        <begin position="269"/>
        <end position="271"/>
    </location>
</feature>
<feature type="helix" evidence="4">
    <location>
        <begin position="277"/>
        <end position="291"/>
    </location>
</feature>
<feature type="helix" evidence="4">
    <location>
        <begin position="303"/>
        <end position="324"/>
    </location>
</feature>
<feature type="strand" evidence="5">
    <location>
        <begin position="325"/>
        <end position="327"/>
    </location>
</feature>
<feature type="helix" evidence="4">
    <location>
        <begin position="328"/>
        <end position="338"/>
    </location>
</feature>
<feature type="helix" evidence="4">
    <location>
        <begin position="342"/>
        <end position="344"/>
    </location>
</feature>
<feature type="helix" evidence="4">
    <location>
        <begin position="346"/>
        <end position="348"/>
    </location>
</feature>
<feature type="strand" evidence="4">
    <location>
        <begin position="360"/>
        <end position="363"/>
    </location>
</feature>
<feature type="helix" evidence="4">
    <location>
        <begin position="371"/>
        <end position="373"/>
    </location>
</feature>
<feature type="turn" evidence="4">
    <location>
        <begin position="384"/>
        <end position="388"/>
    </location>
</feature>
<feature type="strand" evidence="4">
    <location>
        <begin position="408"/>
        <end position="412"/>
    </location>
</feature>
<feature type="helix" evidence="7">
    <location>
        <begin position="424"/>
        <end position="431"/>
    </location>
</feature>
<feature type="helix" evidence="7">
    <location>
        <begin position="433"/>
        <end position="438"/>
    </location>
</feature>
<feature type="helix" evidence="7">
    <location>
        <begin position="441"/>
        <end position="443"/>
    </location>
</feature>
<feature type="strand" evidence="7">
    <location>
        <begin position="447"/>
        <end position="451"/>
    </location>
</feature>
<feature type="helix" evidence="4">
    <location>
        <begin position="453"/>
        <end position="455"/>
    </location>
</feature>
<feature type="helix" evidence="7">
    <location>
        <begin position="458"/>
        <end position="472"/>
    </location>
</feature>
<feature type="turn" evidence="7">
    <location>
        <begin position="474"/>
        <end position="476"/>
    </location>
</feature>
<feature type="helix" evidence="7">
    <location>
        <begin position="478"/>
        <end position="482"/>
    </location>
</feature>
<feature type="strand" evidence="7">
    <location>
        <begin position="487"/>
        <end position="493"/>
    </location>
</feature>
<feature type="helix" evidence="7">
    <location>
        <begin position="496"/>
        <end position="501"/>
    </location>
</feature>
<feature type="strand" evidence="7">
    <location>
        <begin position="504"/>
        <end position="509"/>
    </location>
</feature>
<feature type="helix" evidence="7">
    <location>
        <begin position="511"/>
        <end position="521"/>
    </location>
</feature>
<feature type="helix" evidence="7">
    <location>
        <begin position="525"/>
        <end position="527"/>
    </location>
</feature>
<feature type="helix" evidence="7">
    <location>
        <begin position="533"/>
        <end position="536"/>
    </location>
</feature>
<feature type="strand" evidence="7">
    <location>
        <begin position="537"/>
        <end position="540"/>
    </location>
</feature>
<feature type="strand" evidence="7">
    <location>
        <begin position="543"/>
        <end position="545"/>
    </location>
</feature>
<feature type="strand" evidence="6">
    <location>
        <begin position="548"/>
        <end position="552"/>
    </location>
</feature>
<feature type="strand" evidence="7">
    <location>
        <begin position="554"/>
        <end position="556"/>
    </location>
</feature>
<feature type="helix" evidence="7">
    <location>
        <begin position="565"/>
        <end position="576"/>
    </location>
</feature>
<feature type="helix" evidence="7">
    <location>
        <begin position="588"/>
        <end position="602"/>
    </location>
</feature>
<feature type="strand" evidence="7">
    <location>
        <begin position="608"/>
        <end position="610"/>
    </location>
</feature>
<feature type="helix" evidence="7">
    <location>
        <begin position="614"/>
        <end position="621"/>
    </location>
</feature>
<feature type="strand" evidence="7">
    <location>
        <begin position="625"/>
        <end position="632"/>
    </location>
</feature>
<feature type="helix" evidence="7">
    <location>
        <begin position="633"/>
        <end position="636"/>
    </location>
</feature>
<feature type="strand" evidence="7">
    <location>
        <begin position="639"/>
        <end position="642"/>
    </location>
</feature>
<feature type="turn" evidence="4">
    <location>
        <begin position="643"/>
        <end position="645"/>
    </location>
</feature>
<feature type="helix" evidence="7">
    <location>
        <begin position="651"/>
        <end position="664"/>
    </location>
</feature>
<feature type="strand" evidence="7">
    <location>
        <begin position="669"/>
        <end position="676"/>
    </location>
</feature>
<feature type="strand" evidence="7">
    <location>
        <begin position="679"/>
        <end position="686"/>
    </location>
</feature>
<feature type="strand" evidence="6">
    <location>
        <begin position="693"/>
        <end position="695"/>
    </location>
</feature>
<feature type="helix" evidence="7">
    <location>
        <begin position="700"/>
        <end position="703"/>
    </location>
</feature>
<feature type="strand" evidence="7">
    <location>
        <begin position="707"/>
        <end position="712"/>
    </location>
</feature>
<feature type="strand" evidence="7">
    <location>
        <begin position="725"/>
        <end position="728"/>
    </location>
</feature>
<feature type="helix" evidence="7">
    <location>
        <begin position="731"/>
        <end position="733"/>
    </location>
</feature>
<feature type="strand" evidence="7">
    <location>
        <begin position="737"/>
        <end position="744"/>
    </location>
</feature>
<feature type="strand" evidence="7">
    <location>
        <begin position="746"/>
        <end position="751"/>
    </location>
</feature>
<feature type="helix" evidence="7">
    <location>
        <begin position="756"/>
        <end position="761"/>
    </location>
</feature>
<feature type="strand" evidence="7">
    <location>
        <begin position="769"/>
        <end position="773"/>
    </location>
</feature>
<feature type="turn" evidence="7">
    <location>
        <begin position="775"/>
        <end position="777"/>
    </location>
</feature>
<feature type="strand" evidence="7">
    <location>
        <begin position="781"/>
        <end position="785"/>
    </location>
</feature>
<feature type="strand" evidence="7">
    <location>
        <begin position="787"/>
        <end position="795"/>
    </location>
</feature>
<feature type="helix" evidence="7">
    <location>
        <begin position="823"/>
        <end position="826"/>
    </location>
</feature>
<feature type="strand" evidence="7">
    <location>
        <begin position="830"/>
        <end position="832"/>
    </location>
</feature>
<feature type="helix" evidence="7">
    <location>
        <begin position="844"/>
        <end position="846"/>
    </location>
</feature>
<feature type="helix" evidence="7">
    <location>
        <begin position="848"/>
        <end position="854"/>
    </location>
</feature>
<feature type="helix" evidence="7">
    <location>
        <begin position="856"/>
        <end position="861"/>
    </location>
</feature>
<feature type="strand" evidence="7">
    <location>
        <begin position="866"/>
        <end position="868"/>
    </location>
</feature>
<feature type="helix" evidence="7">
    <location>
        <begin position="883"/>
        <end position="888"/>
    </location>
</feature>
<feature type="strand" evidence="4">
    <location>
        <begin position="889"/>
        <end position="893"/>
    </location>
</feature>
<feature type="helix" evidence="7">
    <location>
        <begin position="894"/>
        <end position="896"/>
    </location>
</feature>
<feature type="strand" evidence="7">
    <location>
        <begin position="898"/>
        <end position="902"/>
    </location>
</feature>
<feature type="helix" evidence="7">
    <location>
        <begin position="909"/>
        <end position="921"/>
    </location>
</feature>
<feature type="strand" evidence="7">
    <location>
        <begin position="925"/>
        <end position="930"/>
    </location>
</feature>
<feature type="strand" evidence="4">
    <location>
        <begin position="933"/>
        <end position="935"/>
    </location>
</feature>
<feature type="strand" evidence="4">
    <location>
        <begin position="939"/>
        <end position="949"/>
    </location>
</feature>
<feature type="strand" evidence="4">
    <location>
        <begin position="962"/>
        <end position="971"/>
    </location>
</feature>
<feature type="strand" evidence="4">
    <location>
        <begin position="974"/>
        <end position="976"/>
    </location>
</feature>
<feature type="helix" evidence="4">
    <location>
        <begin position="977"/>
        <end position="981"/>
    </location>
</feature>
<feature type="turn" evidence="4">
    <location>
        <begin position="982"/>
        <end position="985"/>
    </location>
</feature>
<feature type="helix" evidence="4">
    <location>
        <begin position="986"/>
        <end position="992"/>
    </location>
</feature>
<feature type="helix" evidence="4">
    <location>
        <begin position="994"/>
        <end position="997"/>
    </location>
</feature>
<feature type="turn" evidence="4">
    <location>
        <begin position="1002"/>
        <end position="1004"/>
    </location>
</feature>
<feature type="helix" evidence="4">
    <location>
        <begin position="1019"/>
        <end position="1021"/>
    </location>
</feature>
<feature type="strand" evidence="4">
    <location>
        <begin position="1022"/>
        <end position="1026"/>
    </location>
</feature>
<feature type="turn" evidence="4">
    <location>
        <begin position="1039"/>
        <end position="1042"/>
    </location>
</feature>
<accession>P08987</accession>
<accession>O69381</accession>
<accession>O69384</accession>
<accession>O69387</accession>
<accession>O69390</accession>
<accession>O69396</accession>
<organism>
    <name type="scientific">Streptococcus mutans serotype c (strain ATCC 700610 / UA159)</name>
    <dbReference type="NCBI Taxonomy" id="210007"/>
    <lineage>
        <taxon>Bacteria</taxon>
        <taxon>Bacillati</taxon>
        <taxon>Bacillota</taxon>
        <taxon>Bacilli</taxon>
        <taxon>Lactobacillales</taxon>
        <taxon>Streptococcaceae</taxon>
        <taxon>Streptococcus</taxon>
    </lineage>
</organism>
<sequence length="1476" mass="165847">MDKKVRYKLRKVKKRWVTVSVASAVMTLTTLSGGLVKADSNESKSQISNDSNTSVVTANEESNVTTEVTSKQEAASSQTNHTVTTISSSTSVVNPKEVVSNPYTVGETASNGEKLQNQTTTVDKTSEAAANNISKQTTEADTDVIDDSNAANLQILEKLPNVKEIDGKYYYYDNNGKVRTNFTLIADGKILHFDETGAYTDTSIDTVNKDIVTTRSNLYKKYNQVYDRSAQSFEHVDHYLTAESWYRPKYILKDGKTWTQSTEKDFRPLLMTWWPSQETQRQYVNYMNAQLGINKTYDDTSNQLQLNIAAATIQAKIEAKITTLKNTDWLRQTISAFVKTQSAWNSDSEKPFDDHLQNGAVLYDNEGKLTPYANSNYRILNRTPTNQTGKKDPRYTADNTIGGYEFLLANDVDNSNPVVQAEQLNWLHFLMNFGNIYANDPDANFDSIRVDAVDNVDADLLQIAGDYLKAAKGIHKNDKAANDHLSILEAWSDNDTPYLHDDGDNMINMDNKLRLSLLFSLAKPLNQRSGMNPLITNSLVNRTDDNAETAAVPSYSFIRAHDSEVQDLIRDIIKAEINPNVVGYSFTMEEIKKAFEIYNKDLLATEKKYTHYNTALSYALLLTNKSSVPRVYYGDMFTDDGQYMAHKTINYEAIETLLKARIKYVSGGQAMRNQQVGNSEIITSVRYGKGALKATDTGDRTTRTSGVAVIEGNNPSLRLKASDRVVVNMGAAHKNQAYRPLLLTTDNGIKAYHSDQEAAGLVRYTNDRGELIFTAADIKGYANPQVSGYLGVWVPVGAAADQDVRVAASTAPSTDGKSVHQNAALDSRVMFEGFSNFQAFATKKEEYTNVVIAKNVDKFAEWGVTDFEMAPQYVSSTDGSFLDSVIQNGYAFTDRYDLGISKPNKYGTADDLVKAIKALHSKGIKVMADWVPDQMYAFPEKEVVTATRVDKFGKPVEGSQIKSVLYVADSKSSGKDQQAKYGGAFLEELQAKYPELFARKQISTGVPMDPSVKIKQWSAKYFNGTNILGRGAGYVLKDQATNTYFNISDNKEINFLPKTLLNQDSQVGFSYDGKGYVYYSTSGYQAKNTFISEGDKWYYFDNNGYMVTGAQSINGVNYYFLSNGLQLRDAILKNEDGTYAYYGNDGRRYENGYYQFMSGVWRHFNNGEMSVGLTVIDGQVQYFDEMGYQAKGKFVTTADGKIRYFDKQSGNMYRNRFIENEEGKWLYLGEDGAAVTGSQTINGQHLYFRANGVQVKGEFVTDRYGRISYYDSNSGDQIRNRFVRNAQGQWFYFDNNGYAVTGARTINGQHLYFRANGVQVKGEFVTDRHGRISYYDGNSGDQIRNRFVRNAQGQWFYFDNNGYAVTGARTINGQHLYFRANGVQVKGEFVTDRYGRISYYDSNSGDQIRNRFVRNAQGQWFYFDNNGYAVTGARTINGQHLYFRANGVQVKGEFVTDRYGRISYYDANSGERVRIN</sequence>
<reference key="1">
    <citation type="journal article" date="1987" name="J. Bacteriol.">
        <title>Sequence analysis of the gtfB gene from Streptococcus mutans.</title>
        <authorList>
            <person name="Shiroza T."/>
            <person name="Ueda S."/>
            <person name="Kuramitsu H.K."/>
        </authorList>
    </citation>
    <scope>NUCLEOTIDE SEQUENCE [GENOMIC DNA]</scope>
    <source>
        <strain>GS-5</strain>
    </source>
</reference>
<reference key="2">
    <citation type="journal article" date="1998" name="FEMS Microbiol. Lett.">
        <title>Molecular analyses of glucosyltransferase genes among strains of Streptococcus mutans.</title>
        <authorList>
            <person name="Fujiwara T."/>
            <person name="Terao Y."/>
            <person name="Hoshino T."/>
            <person name="Kawabata S."/>
            <person name="Ooshima T."/>
            <person name="Sobue S."/>
            <person name="Kimura S."/>
            <person name="Hamada S."/>
        </authorList>
    </citation>
    <scope>NUCLEOTIDE SEQUENCE [GENOMIC DNA]</scope>
    <source>
        <strain>MT4239 / Serotype c</strain>
        <strain>MT4245 / Serotype e</strain>
        <strain>MT4251 / Serotype f</strain>
        <strain>MT4467 / Serotype e</strain>
        <strain>MT8148 / Serotype c</strain>
    </source>
</reference>
<reference key="3">
    <citation type="journal article" date="2002" name="Proc. Natl. Acad. Sci. U.S.A.">
        <title>Genome sequence of Streptococcus mutans UA159, a cariogenic dental pathogen.</title>
        <authorList>
            <person name="Ajdic D.J."/>
            <person name="McShan W.M."/>
            <person name="McLaughlin R.E."/>
            <person name="Savic G."/>
            <person name="Chang J."/>
            <person name="Carson M.B."/>
            <person name="Primeaux C."/>
            <person name="Tian R."/>
            <person name="Kenton S."/>
            <person name="Jia H.G."/>
            <person name="Lin S.P."/>
            <person name="Qian Y."/>
            <person name="Li S."/>
            <person name="Zhu H."/>
            <person name="Najar F.Z."/>
            <person name="Lai H."/>
            <person name="White J."/>
            <person name="Roe B.A."/>
            <person name="Ferretti J.J."/>
        </authorList>
    </citation>
    <scope>NUCLEOTIDE SEQUENCE [LARGE SCALE GENOMIC DNA]</scope>
    <source>
        <strain>ATCC 700610 / UA159</strain>
    </source>
</reference>
<dbReference type="EC" id="2.4.1.5"/>
<dbReference type="EMBL" id="M17361">
    <property type="protein sequence ID" value="AAA88588.1"/>
    <property type="molecule type" value="Genomic_DNA"/>
</dbReference>
<dbReference type="EMBL" id="D88651">
    <property type="protein sequence ID" value="BAA26101.1"/>
    <property type="molecule type" value="Genomic_DNA"/>
</dbReference>
<dbReference type="EMBL" id="D88654">
    <property type="protein sequence ID" value="BAA26105.1"/>
    <property type="molecule type" value="Genomic_DNA"/>
</dbReference>
<dbReference type="EMBL" id="D88657">
    <property type="protein sequence ID" value="BAA26109.1"/>
    <property type="molecule type" value="Genomic_DNA"/>
</dbReference>
<dbReference type="EMBL" id="D88660">
    <property type="protein sequence ID" value="BAA26113.1"/>
    <property type="molecule type" value="Genomic_DNA"/>
</dbReference>
<dbReference type="EMBL" id="D89977">
    <property type="protein sequence ID" value="BAA26119.1"/>
    <property type="molecule type" value="Genomic_DNA"/>
</dbReference>
<dbReference type="EMBL" id="AE014133">
    <property type="protein sequence ID" value="AAN58705.1"/>
    <property type="molecule type" value="Genomic_DNA"/>
</dbReference>
<dbReference type="PIR" id="B33135">
    <property type="entry name" value="B33135"/>
</dbReference>
<dbReference type="RefSeq" id="NP_721399.1">
    <property type="nucleotide sequence ID" value="NC_004350.2"/>
</dbReference>
<dbReference type="RefSeq" id="WP_002352268.1">
    <property type="nucleotide sequence ID" value="NC_004350.2"/>
</dbReference>
<dbReference type="PDB" id="8FG8">
    <property type="method" value="X-ray"/>
    <property type="resolution" value="2.35 A"/>
    <property type="chains" value="A/B=191-1051"/>
</dbReference>
<dbReference type="PDB" id="8FJ9">
    <property type="method" value="X-ray"/>
    <property type="resolution" value="2.50 A"/>
    <property type="chains" value="A/B=191-1051"/>
</dbReference>
<dbReference type="PDB" id="8FJC">
    <property type="method" value="X-ray"/>
    <property type="resolution" value="2.50 A"/>
    <property type="chains" value="A/B=191-1051"/>
</dbReference>
<dbReference type="PDB" id="8FK4">
    <property type="method" value="X-ray"/>
    <property type="resolution" value="3.25 A"/>
    <property type="chains" value="A/B/C/D/E/F/G/H=191-1051"/>
</dbReference>
<dbReference type="PDB" id="8FKL">
    <property type="method" value="X-ray"/>
    <property type="resolution" value="1.48 A"/>
    <property type="chains" value="A=421-940"/>
</dbReference>
<dbReference type="PDB" id="8UF5">
    <property type="method" value="X-ray"/>
    <property type="resolution" value="2.50 A"/>
    <property type="chains" value="A/B=191-1051"/>
</dbReference>
<dbReference type="PDBsum" id="8FG8"/>
<dbReference type="PDBsum" id="8FJ9"/>
<dbReference type="PDBsum" id="8FJC"/>
<dbReference type="PDBsum" id="8FK4"/>
<dbReference type="PDBsum" id="8FKL"/>
<dbReference type="PDBsum" id="8UF5"/>
<dbReference type="SMR" id="P08987"/>
<dbReference type="STRING" id="210007.SMU_1004"/>
<dbReference type="ChEMBL" id="CHEMBL3822351"/>
<dbReference type="CAZy" id="GH70">
    <property type="family name" value="Glycoside Hydrolase Family 70"/>
</dbReference>
<dbReference type="ABCD" id="P08987">
    <property type="antibodies" value="3 sequenced antibodies"/>
</dbReference>
<dbReference type="KEGG" id="smu:SMU_1004"/>
<dbReference type="PATRIC" id="fig|210007.7.peg.897"/>
<dbReference type="eggNOG" id="COG0366">
    <property type="taxonomic scope" value="Bacteria"/>
</dbReference>
<dbReference type="eggNOG" id="COG5263">
    <property type="taxonomic scope" value="Bacteria"/>
</dbReference>
<dbReference type="HOGENOM" id="CLU_001623_1_0_9"/>
<dbReference type="OrthoDB" id="2032428at2"/>
<dbReference type="PhylomeDB" id="P08987"/>
<dbReference type="SABIO-RK" id="P08987"/>
<dbReference type="PHI-base" id="PHI:7053"/>
<dbReference type="Proteomes" id="UP000002512">
    <property type="component" value="Chromosome"/>
</dbReference>
<dbReference type="GO" id="GO:0005576">
    <property type="term" value="C:extracellular region"/>
    <property type="evidence" value="ECO:0007669"/>
    <property type="project" value="UniProtKB-SubCell"/>
</dbReference>
<dbReference type="GO" id="GO:0047849">
    <property type="term" value="F:dextransucrase activity"/>
    <property type="evidence" value="ECO:0007669"/>
    <property type="project" value="UniProtKB-EC"/>
</dbReference>
<dbReference type="GO" id="GO:0046527">
    <property type="term" value="F:glucosyltransferase activity"/>
    <property type="evidence" value="ECO:0007669"/>
    <property type="project" value="InterPro"/>
</dbReference>
<dbReference type="GO" id="GO:0009250">
    <property type="term" value="P:glucan biosynthetic process"/>
    <property type="evidence" value="ECO:0007669"/>
    <property type="project" value="InterPro"/>
</dbReference>
<dbReference type="Gene3D" id="2.30.30.20">
    <property type="entry name" value="Aspartate carbamoyltransferase regulatory subunit, C-terminal domain"/>
    <property type="match status" value="1"/>
</dbReference>
<dbReference type="Gene3D" id="2.10.270.10">
    <property type="entry name" value="Cholin Binding"/>
    <property type="match status" value="3"/>
</dbReference>
<dbReference type="Gene3D" id="3.20.20.470">
    <property type="entry name" value="Glucansucrase"/>
    <property type="match status" value="1"/>
</dbReference>
<dbReference type="Gene3D" id="2.30.30.420">
    <property type="entry name" value="glucansucrase"/>
    <property type="match status" value="1"/>
</dbReference>
<dbReference type="InterPro" id="IPR018337">
    <property type="entry name" value="Cell_wall/Cho-bd_repeat"/>
</dbReference>
<dbReference type="InterPro" id="IPR027636">
    <property type="entry name" value="Glucan-bd_rpt"/>
</dbReference>
<dbReference type="InterPro" id="IPR003318">
    <property type="entry name" value="Glyco_hydro70cat"/>
</dbReference>
<dbReference type="InterPro" id="IPR017853">
    <property type="entry name" value="Glycoside_hydrolase_SF"/>
</dbReference>
<dbReference type="InterPro" id="IPR022263">
    <property type="entry name" value="KxYKxGKxW"/>
</dbReference>
<dbReference type="NCBIfam" id="TIGR04035">
    <property type="entry name" value="glucan_65_rpt"/>
    <property type="match status" value="6"/>
</dbReference>
<dbReference type="NCBIfam" id="TIGR03715">
    <property type="entry name" value="KxYKxGKxW"/>
    <property type="match status" value="1"/>
</dbReference>
<dbReference type="Pfam" id="PF01473">
    <property type="entry name" value="Choline_bind_1"/>
    <property type="match status" value="1"/>
</dbReference>
<dbReference type="Pfam" id="PF19127">
    <property type="entry name" value="Choline_bind_3"/>
    <property type="match status" value="6"/>
</dbReference>
<dbReference type="Pfam" id="PF02324">
    <property type="entry name" value="Glyco_hydro_70"/>
    <property type="match status" value="1"/>
</dbReference>
<dbReference type="Pfam" id="PF19258">
    <property type="entry name" value="KxYKxGKxW_sig"/>
    <property type="match status" value="1"/>
</dbReference>
<dbReference type="SUPFAM" id="SSF51445">
    <property type="entry name" value="(Trans)glycosidases"/>
    <property type="match status" value="2"/>
</dbReference>
<dbReference type="SUPFAM" id="SSF69360">
    <property type="entry name" value="Cell wall binding repeat"/>
    <property type="match status" value="3"/>
</dbReference>
<dbReference type="PROSITE" id="PS51170">
    <property type="entry name" value="CW"/>
    <property type="match status" value="13"/>
</dbReference>
<protein>
    <recommendedName>
        <fullName>Glucosyltransferase-I</fullName>
        <shortName>GTF-I</shortName>
        <ecNumber>2.4.1.5</ecNumber>
    </recommendedName>
    <alternativeName>
        <fullName>Dextransucrase</fullName>
    </alternativeName>
    <alternativeName>
        <fullName>Sucrose 6-glucosyltransferase</fullName>
    </alternativeName>
</protein>
<comment type="function">
    <text>Production of extracellular glucans, that are thought to play a key role in the development of the dental plaque because of their ability to adhere to smooth surfaces and mediate the aggregation of bacterial cells and food debris.</text>
</comment>
<comment type="catalytic activity">
    <reaction>
        <text>[(1-&gt;6)-alpha-D-glucosyl](n) + sucrose = [(1-&gt;6)-alpha-D-glucosyl](n+1) + D-fructose</text>
        <dbReference type="Rhea" id="RHEA:18825"/>
        <dbReference type="Rhea" id="RHEA-COMP:11144"/>
        <dbReference type="Rhea" id="RHEA-COMP:11145"/>
        <dbReference type="ChEBI" id="CHEBI:17992"/>
        <dbReference type="ChEBI" id="CHEBI:18269"/>
        <dbReference type="ChEBI" id="CHEBI:37721"/>
        <dbReference type="EC" id="2.4.1.5"/>
    </reaction>
</comment>
<comment type="subcellular location">
    <subcellularLocation>
        <location>Secreted</location>
    </subcellularLocation>
</comment>
<comment type="miscellaneous">
    <text>GTF-I synthesizes water-insoluble glucans (alpha 1,3-linked glucose and some 1,6 linkages), GTF-S synthesizes water-soluble glucans (alpha 1,6-glucose). GTF-SI synthesizes both forms of glucans.</text>
</comment>
<comment type="similarity">
    <text evidence="3">Belongs to the glycosyl hydrolase 70 family.</text>
</comment>
<gene>
    <name type="primary">gtfB</name>
    <name type="ordered locus">SMU_1004</name>
</gene>
<evidence type="ECO:0000255" key="1"/>
<evidence type="ECO:0000256" key="2">
    <source>
        <dbReference type="SAM" id="MobiDB-lite"/>
    </source>
</evidence>
<evidence type="ECO:0000305" key="3"/>
<evidence type="ECO:0007829" key="4">
    <source>
        <dbReference type="PDB" id="8FG8"/>
    </source>
</evidence>
<evidence type="ECO:0007829" key="5">
    <source>
        <dbReference type="PDB" id="8FJC"/>
    </source>
</evidence>
<evidence type="ECO:0007829" key="6">
    <source>
        <dbReference type="PDB" id="8FK4"/>
    </source>
</evidence>
<evidence type="ECO:0007829" key="7">
    <source>
        <dbReference type="PDB" id="8FKL"/>
    </source>
</evidence>
<name>GTFB_STRMU</name>
<keyword id="KW-0002">3D-structure</keyword>
<keyword id="KW-0214">Dental caries</keyword>
<keyword id="KW-0328">Glycosyltransferase</keyword>
<keyword id="KW-1185">Reference proteome</keyword>
<keyword id="KW-0677">Repeat</keyword>
<keyword id="KW-0964">Secreted</keyword>
<keyword id="KW-0732">Signal</keyword>
<keyword id="KW-0808">Transferase</keyword>